<evidence type="ECO:0000255" key="1">
    <source>
        <dbReference type="HAMAP-Rule" id="MF_00332"/>
    </source>
</evidence>
<evidence type="ECO:0000256" key="2">
    <source>
        <dbReference type="SAM" id="MobiDB-lite"/>
    </source>
</evidence>
<name>DNAK_ACIB5</name>
<reference key="1">
    <citation type="journal article" date="2008" name="J. Bacteriol.">
        <title>Comparative genome sequence analysis of multidrug-resistant Acinetobacter baumannii.</title>
        <authorList>
            <person name="Adams M.D."/>
            <person name="Goglin K."/>
            <person name="Molyneaux N."/>
            <person name="Hujer K.M."/>
            <person name="Lavender H."/>
            <person name="Jamison J.J."/>
            <person name="MacDonald I.J."/>
            <person name="Martin K.M."/>
            <person name="Russo T."/>
            <person name="Campagnari A.A."/>
            <person name="Hujer A.M."/>
            <person name="Bonomo R.A."/>
            <person name="Gill S.R."/>
        </authorList>
    </citation>
    <scope>NUCLEOTIDE SEQUENCE [LARGE SCALE GENOMIC DNA]</scope>
    <source>
        <strain>AB0057</strain>
    </source>
</reference>
<protein>
    <recommendedName>
        <fullName evidence="1">Chaperone protein DnaK</fullName>
    </recommendedName>
    <alternativeName>
        <fullName evidence="1">HSP70</fullName>
    </alternativeName>
    <alternativeName>
        <fullName evidence="1">Heat shock 70 kDa protein</fullName>
    </alternativeName>
    <alternativeName>
        <fullName evidence="1">Heat shock protein 70</fullName>
    </alternativeName>
</protein>
<sequence>MAKIIGIDLGTTNSCVAVLEGDKVKVIENAEGARTTPSIIAYKDGEILVGQSAKRQAVTNPKNTLFAIKRLIGRRYEDQAVQKDIGLVPYKIIKADNGDAWVEVNDKKLAPQQISAEILKKMKKTAEDYLGETVTEAVITVPAYFNDAQRQATKDAGKIAGLDVKRIINEPTAAALAFGMDKKEGDRKVAVYDLGGGTFDVSIIEIADLDGDQQIEVLSTNGDTFLGGEDFDNALIEYLVEEFKKEQNVNLKNDPLALQRLKEAAEKAKIELSSSNATEINLPYITADATGPKHLVINVTRAKLEGLVADLVARTIEPCKIALKDAGLSTSDISDVILVGGQSRMPLVQQKVQEFFGREPRKDVNPDEAVAIGAAIQGAVLSGDKNDVLLLDVTPLTLGIETMGGVLTPIIEKNTTIPAKKSQVFSTAADNQPAVDISVYQGERKMAQQNKLLGNFQLGDIPPAPRGVPQIEVSFDINADGILKVSAKDKSTGKEQSIQIKANSGLSDAEIEAMIKDAEANAEEDRKFEELAKARNEADALISSSNKAVKDLGDKVTEDEKTAVNTAVSELEAATKENDVEVIKAKTEALQNILMPITQRAYEQAQQAGGAEGFDPNAFQGGDAGQQKADDGVVDAEFTEVKDDKK</sequence>
<comment type="function">
    <text evidence="1">Acts as a chaperone.</text>
</comment>
<comment type="induction">
    <text evidence="1">By stress conditions e.g. heat shock.</text>
</comment>
<comment type="similarity">
    <text evidence="1">Belongs to the heat shock protein 70 family.</text>
</comment>
<gene>
    <name evidence="1" type="primary">dnaK</name>
    <name type="ordered locus">AB57_0048</name>
</gene>
<proteinExistence type="inferred from homology"/>
<keyword id="KW-0067">ATP-binding</keyword>
<keyword id="KW-0143">Chaperone</keyword>
<keyword id="KW-0547">Nucleotide-binding</keyword>
<keyword id="KW-0597">Phosphoprotein</keyword>
<keyword id="KW-0346">Stress response</keyword>
<dbReference type="EMBL" id="CP001182">
    <property type="protein sequence ID" value="ACJ39480.1"/>
    <property type="molecule type" value="Genomic_DNA"/>
</dbReference>
<dbReference type="RefSeq" id="WP_001062607.1">
    <property type="nucleotide sequence ID" value="NC_011586.2"/>
</dbReference>
<dbReference type="SMR" id="B7IBK5"/>
<dbReference type="KEGG" id="abn:AB57_0048"/>
<dbReference type="HOGENOM" id="CLU_005965_2_4_6"/>
<dbReference type="Proteomes" id="UP000007094">
    <property type="component" value="Chromosome"/>
</dbReference>
<dbReference type="GO" id="GO:0005524">
    <property type="term" value="F:ATP binding"/>
    <property type="evidence" value="ECO:0007669"/>
    <property type="project" value="UniProtKB-UniRule"/>
</dbReference>
<dbReference type="GO" id="GO:0140662">
    <property type="term" value="F:ATP-dependent protein folding chaperone"/>
    <property type="evidence" value="ECO:0007669"/>
    <property type="project" value="InterPro"/>
</dbReference>
<dbReference type="GO" id="GO:0051082">
    <property type="term" value="F:unfolded protein binding"/>
    <property type="evidence" value="ECO:0007669"/>
    <property type="project" value="InterPro"/>
</dbReference>
<dbReference type="CDD" id="cd10234">
    <property type="entry name" value="ASKHA_NBD_HSP70_DnaK-like"/>
    <property type="match status" value="1"/>
</dbReference>
<dbReference type="FunFam" id="2.60.34.10:FF:000014">
    <property type="entry name" value="Chaperone protein DnaK HSP70"/>
    <property type="match status" value="1"/>
</dbReference>
<dbReference type="FunFam" id="1.20.1270.10:FF:000001">
    <property type="entry name" value="Molecular chaperone DnaK"/>
    <property type="match status" value="1"/>
</dbReference>
<dbReference type="FunFam" id="3.30.420.40:FF:000004">
    <property type="entry name" value="Molecular chaperone DnaK"/>
    <property type="match status" value="1"/>
</dbReference>
<dbReference type="FunFam" id="3.90.640.10:FF:000003">
    <property type="entry name" value="Molecular chaperone DnaK"/>
    <property type="match status" value="1"/>
</dbReference>
<dbReference type="Gene3D" id="1.20.1270.10">
    <property type="match status" value="1"/>
</dbReference>
<dbReference type="Gene3D" id="3.30.420.40">
    <property type="match status" value="2"/>
</dbReference>
<dbReference type="Gene3D" id="3.90.640.10">
    <property type="entry name" value="Actin, Chain A, domain 4"/>
    <property type="match status" value="1"/>
</dbReference>
<dbReference type="Gene3D" id="2.60.34.10">
    <property type="entry name" value="Substrate Binding Domain Of DNAk, Chain A, domain 1"/>
    <property type="match status" value="1"/>
</dbReference>
<dbReference type="HAMAP" id="MF_00332">
    <property type="entry name" value="DnaK"/>
    <property type="match status" value="1"/>
</dbReference>
<dbReference type="InterPro" id="IPR043129">
    <property type="entry name" value="ATPase_NBD"/>
</dbReference>
<dbReference type="InterPro" id="IPR012725">
    <property type="entry name" value="Chaperone_DnaK"/>
</dbReference>
<dbReference type="InterPro" id="IPR018181">
    <property type="entry name" value="Heat_shock_70_CS"/>
</dbReference>
<dbReference type="InterPro" id="IPR029048">
    <property type="entry name" value="HSP70_C_sf"/>
</dbReference>
<dbReference type="InterPro" id="IPR029047">
    <property type="entry name" value="HSP70_peptide-bd_sf"/>
</dbReference>
<dbReference type="InterPro" id="IPR013126">
    <property type="entry name" value="Hsp_70_fam"/>
</dbReference>
<dbReference type="NCBIfam" id="NF001413">
    <property type="entry name" value="PRK00290.1"/>
    <property type="match status" value="1"/>
</dbReference>
<dbReference type="NCBIfam" id="TIGR02350">
    <property type="entry name" value="prok_dnaK"/>
    <property type="match status" value="1"/>
</dbReference>
<dbReference type="PANTHER" id="PTHR19375">
    <property type="entry name" value="HEAT SHOCK PROTEIN 70KDA"/>
    <property type="match status" value="1"/>
</dbReference>
<dbReference type="Pfam" id="PF00012">
    <property type="entry name" value="HSP70"/>
    <property type="match status" value="1"/>
</dbReference>
<dbReference type="PRINTS" id="PR00301">
    <property type="entry name" value="HEATSHOCK70"/>
</dbReference>
<dbReference type="SUPFAM" id="SSF53067">
    <property type="entry name" value="Actin-like ATPase domain"/>
    <property type="match status" value="2"/>
</dbReference>
<dbReference type="SUPFAM" id="SSF100934">
    <property type="entry name" value="Heat shock protein 70kD (HSP70), C-terminal subdomain"/>
    <property type="match status" value="1"/>
</dbReference>
<dbReference type="SUPFAM" id="SSF100920">
    <property type="entry name" value="Heat shock protein 70kD (HSP70), peptide-binding domain"/>
    <property type="match status" value="1"/>
</dbReference>
<dbReference type="PROSITE" id="PS00297">
    <property type="entry name" value="HSP70_1"/>
    <property type="match status" value="1"/>
</dbReference>
<dbReference type="PROSITE" id="PS00329">
    <property type="entry name" value="HSP70_2"/>
    <property type="match status" value="1"/>
</dbReference>
<dbReference type="PROSITE" id="PS01036">
    <property type="entry name" value="HSP70_3"/>
    <property type="match status" value="1"/>
</dbReference>
<feature type="chain" id="PRO_1000119652" description="Chaperone protein DnaK">
    <location>
        <begin position="1"/>
        <end position="646"/>
    </location>
</feature>
<feature type="region of interest" description="Disordered" evidence="2">
    <location>
        <begin position="603"/>
        <end position="646"/>
    </location>
</feature>
<feature type="compositionally biased region" description="Low complexity" evidence="2">
    <location>
        <begin position="618"/>
        <end position="627"/>
    </location>
</feature>
<feature type="modified residue" description="Phosphothreonine; by autocatalysis" evidence="1">
    <location>
        <position position="198"/>
    </location>
</feature>
<organism>
    <name type="scientific">Acinetobacter baumannii (strain AB0057)</name>
    <dbReference type="NCBI Taxonomy" id="480119"/>
    <lineage>
        <taxon>Bacteria</taxon>
        <taxon>Pseudomonadati</taxon>
        <taxon>Pseudomonadota</taxon>
        <taxon>Gammaproteobacteria</taxon>
        <taxon>Moraxellales</taxon>
        <taxon>Moraxellaceae</taxon>
        <taxon>Acinetobacter</taxon>
        <taxon>Acinetobacter calcoaceticus/baumannii complex</taxon>
    </lineage>
</organism>
<accession>B7IBK5</accession>